<protein>
    <recommendedName>
        <fullName evidence="1">Glutamate--tRNA ligase</fullName>
        <ecNumber evidence="1">6.1.1.17</ecNumber>
    </recommendedName>
    <alternativeName>
        <fullName evidence="1">Glutamyl-tRNA synthetase</fullName>
        <shortName evidence="1">GluRS</shortName>
    </alternativeName>
</protein>
<sequence>MINRRIRVRFAPSPTGPLHIGGVRTALYNYLFARQHGGDMILRIEDTDSNRFVPGAEAYIIEALEWLGIKFDEGVGYGGRFGPYRQSERRDIYRTYVRQLLDSGRAYIAFDTPEELEARRAEVPNFQYDATTRGQMRNSLTLPAEEVERLVAEGTQYVVRFLVEPNLDVEVNDLIRGRVVINSSILDDKVLYKSADDLPTYHLANIVDDHLMEVSHVIRGEEWLPSAPLHVLLYRAFGWEDTMPRFAHLALLLKPEGNGKLSKRDGDRLGFPVFPLEWKDPQTGDISKGYRESGYLPEAVVNFLALLGWNPGNDQDVMSMDELIRLFDIEKCSKAGAKFDYEKGRWFNHQYIQRKDNAELAELFRPILRENGVVATDEKTAHVISLVKERVNFIGELWEQAGFFFIAPLSYDEKTVKKRWKEDTAKQLGELAELLDSHRSFAAEATEPTVKNWIETNGYHLGNIMNATRLALVGESKGPHIFDIMEVLGREETVGRIRRAIEVLG</sequence>
<comment type="function">
    <text evidence="1">Catalyzes the attachment of glutamate to tRNA(Glu) in a two-step reaction: glutamate is first activated by ATP to form Glu-AMP and then transferred to the acceptor end of tRNA(Glu).</text>
</comment>
<comment type="catalytic activity">
    <reaction evidence="1">
        <text>tRNA(Glu) + L-glutamate + ATP = L-glutamyl-tRNA(Glu) + AMP + diphosphate</text>
        <dbReference type="Rhea" id="RHEA:23540"/>
        <dbReference type="Rhea" id="RHEA-COMP:9663"/>
        <dbReference type="Rhea" id="RHEA-COMP:9680"/>
        <dbReference type="ChEBI" id="CHEBI:29985"/>
        <dbReference type="ChEBI" id="CHEBI:30616"/>
        <dbReference type="ChEBI" id="CHEBI:33019"/>
        <dbReference type="ChEBI" id="CHEBI:78442"/>
        <dbReference type="ChEBI" id="CHEBI:78520"/>
        <dbReference type="ChEBI" id="CHEBI:456215"/>
        <dbReference type="EC" id="6.1.1.17"/>
    </reaction>
</comment>
<comment type="subunit">
    <text evidence="1">Monomer.</text>
</comment>
<comment type="subcellular location">
    <subcellularLocation>
        <location evidence="1">Cytoplasm</location>
    </subcellularLocation>
</comment>
<comment type="similarity">
    <text evidence="1">Belongs to the class-I aminoacyl-tRNA synthetase family. Glutamate--tRNA ligase type 1 subfamily.</text>
</comment>
<dbReference type="EC" id="6.1.1.17" evidence="1"/>
<dbReference type="EMBL" id="AE015924">
    <property type="protein sequence ID" value="AAQ66600.1"/>
    <property type="molecule type" value="Genomic_DNA"/>
</dbReference>
<dbReference type="RefSeq" id="WP_010956342.1">
    <property type="nucleotide sequence ID" value="NC_002950.2"/>
</dbReference>
<dbReference type="SMR" id="Q7MUF7"/>
<dbReference type="STRING" id="242619.PG_1566"/>
<dbReference type="EnsemblBacteria" id="AAQ66600">
    <property type="protein sequence ID" value="AAQ66600"/>
    <property type="gene ID" value="PG_1566"/>
</dbReference>
<dbReference type="KEGG" id="pgi:PG_1566"/>
<dbReference type="PATRIC" id="fig|242619.8.peg.1452"/>
<dbReference type="eggNOG" id="COG0008">
    <property type="taxonomic scope" value="Bacteria"/>
</dbReference>
<dbReference type="HOGENOM" id="CLU_015768_6_3_10"/>
<dbReference type="BioCyc" id="PGIN242619:G1G02-1465-MONOMER"/>
<dbReference type="Proteomes" id="UP000000588">
    <property type="component" value="Chromosome"/>
</dbReference>
<dbReference type="GO" id="GO:0005829">
    <property type="term" value="C:cytosol"/>
    <property type="evidence" value="ECO:0007669"/>
    <property type="project" value="TreeGrafter"/>
</dbReference>
<dbReference type="GO" id="GO:0005524">
    <property type="term" value="F:ATP binding"/>
    <property type="evidence" value="ECO:0007669"/>
    <property type="project" value="UniProtKB-UniRule"/>
</dbReference>
<dbReference type="GO" id="GO:0004818">
    <property type="term" value="F:glutamate-tRNA ligase activity"/>
    <property type="evidence" value="ECO:0007669"/>
    <property type="project" value="UniProtKB-UniRule"/>
</dbReference>
<dbReference type="GO" id="GO:0000049">
    <property type="term" value="F:tRNA binding"/>
    <property type="evidence" value="ECO:0007669"/>
    <property type="project" value="InterPro"/>
</dbReference>
<dbReference type="GO" id="GO:0008270">
    <property type="term" value="F:zinc ion binding"/>
    <property type="evidence" value="ECO:0007669"/>
    <property type="project" value="InterPro"/>
</dbReference>
<dbReference type="GO" id="GO:0006424">
    <property type="term" value="P:glutamyl-tRNA aminoacylation"/>
    <property type="evidence" value="ECO:0007669"/>
    <property type="project" value="UniProtKB-UniRule"/>
</dbReference>
<dbReference type="CDD" id="cd00808">
    <property type="entry name" value="GluRS_core"/>
    <property type="match status" value="1"/>
</dbReference>
<dbReference type="FunFam" id="3.40.50.620:FF:000127">
    <property type="entry name" value="Glutamate--tRNA ligase"/>
    <property type="match status" value="1"/>
</dbReference>
<dbReference type="Gene3D" id="1.10.10.350">
    <property type="match status" value="1"/>
</dbReference>
<dbReference type="Gene3D" id="3.40.50.620">
    <property type="entry name" value="HUPs"/>
    <property type="match status" value="1"/>
</dbReference>
<dbReference type="HAMAP" id="MF_00022">
    <property type="entry name" value="Glu_tRNA_synth_type1"/>
    <property type="match status" value="1"/>
</dbReference>
<dbReference type="InterPro" id="IPR045462">
    <property type="entry name" value="aa-tRNA-synth_I_cd-bd"/>
</dbReference>
<dbReference type="InterPro" id="IPR020751">
    <property type="entry name" value="aa-tRNA-synth_I_codon-bd_sub2"/>
</dbReference>
<dbReference type="InterPro" id="IPR001412">
    <property type="entry name" value="aa-tRNA-synth_I_CS"/>
</dbReference>
<dbReference type="InterPro" id="IPR008925">
    <property type="entry name" value="aa_tRNA-synth_I_cd-bd_sf"/>
</dbReference>
<dbReference type="InterPro" id="IPR004527">
    <property type="entry name" value="Glu-tRNA-ligase_bac/mito"/>
</dbReference>
<dbReference type="InterPro" id="IPR000924">
    <property type="entry name" value="Glu/Gln-tRNA-synth"/>
</dbReference>
<dbReference type="InterPro" id="IPR020058">
    <property type="entry name" value="Glu/Gln-tRNA-synth_Ib_cat-dom"/>
</dbReference>
<dbReference type="InterPro" id="IPR049940">
    <property type="entry name" value="GluQ/Sye"/>
</dbReference>
<dbReference type="InterPro" id="IPR033910">
    <property type="entry name" value="GluRS_core"/>
</dbReference>
<dbReference type="InterPro" id="IPR014729">
    <property type="entry name" value="Rossmann-like_a/b/a_fold"/>
</dbReference>
<dbReference type="NCBIfam" id="TIGR00464">
    <property type="entry name" value="gltX_bact"/>
    <property type="match status" value="1"/>
</dbReference>
<dbReference type="PANTHER" id="PTHR43311">
    <property type="entry name" value="GLUTAMATE--TRNA LIGASE"/>
    <property type="match status" value="1"/>
</dbReference>
<dbReference type="PANTHER" id="PTHR43311:SF2">
    <property type="entry name" value="GLUTAMATE--TRNA LIGASE, MITOCHONDRIAL-RELATED"/>
    <property type="match status" value="1"/>
</dbReference>
<dbReference type="Pfam" id="PF19269">
    <property type="entry name" value="Anticodon_2"/>
    <property type="match status" value="1"/>
</dbReference>
<dbReference type="Pfam" id="PF00749">
    <property type="entry name" value="tRNA-synt_1c"/>
    <property type="match status" value="1"/>
</dbReference>
<dbReference type="PRINTS" id="PR00987">
    <property type="entry name" value="TRNASYNTHGLU"/>
</dbReference>
<dbReference type="SUPFAM" id="SSF48163">
    <property type="entry name" value="An anticodon-binding domain of class I aminoacyl-tRNA synthetases"/>
    <property type="match status" value="1"/>
</dbReference>
<dbReference type="SUPFAM" id="SSF52374">
    <property type="entry name" value="Nucleotidylyl transferase"/>
    <property type="match status" value="1"/>
</dbReference>
<dbReference type="PROSITE" id="PS00178">
    <property type="entry name" value="AA_TRNA_LIGASE_I"/>
    <property type="match status" value="1"/>
</dbReference>
<organism>
    <name type="scientific">Porphyromonas gingivalis (strain ATCC BAA-308 / W83)</name>
    <dbReference type="NCBI Taxonomy" id="242619"/>
    <lineage>
        <taxon>Bacteria</taxon>
        <taxon>Pseudomonadati</taxon>
        <taxon>Bacteroidota</taxon>
        <taxon>Bacteroidia</taxon>
        <taxon>Bacteroidales</taxon>
        <taxon>Porphyromonadaceae</taxon>
        <taxon>Porphyromonas</taxon>
    </lineage>
</organism>
<keyword id="KW-0030">Aminoacyl-tRNA synthetase</keyword>
<keyword id="KW-0067">ATP-binding</keyword>
<keyword id="KW-0963">Cytoplasm</keyword>
<keyword id="KW-0436">Ligase</keyword>
<keyword id="KW-0547">Nucleotide-binding</keyword>
<keyword id="KW-0648">Protein biosynthesis</keyword>
<keyword id="KW-1185">Reference proteome</keyword>
<proteinExistence type="inferred from homology"/>
<accession>Q7MUF7</accession>
<gene>
    <name evidence="1" type="primary">gltX</name>
    <name type="ordered locus">PG_1566</name>
</gene>
<name>SYE_PORGI</name>
<reference key="1">
    <citation type="journal article" date="2003" name="J. Bacteriol.">
        <title>Complete genome sequence of the oral pathogenic bacterium Porphyromonas gingivalis strain W83.</title>
        <authorList>
            <person name="Nelson K.E."/>
            <person name="Fleischmann R.D."/>
            <person name="DeBoy R.T."/>
            <person name="Paulsen I.T."/>
            <person name="Fouts D.E."/>
            <person name="Eisen J.A."/>
            <person name="Daugherty S.C."/>
            <person name="Dodson R.J."/>
            <person name="Durkin A.S."/>
            <person name="Gwinn M.L."/>
            <person name="Haft D.H."/>
            <person name="Kolonay J.F."/>
            <person name="Nelson W.C."/>
            <person name="Mason T.M."/>
            <person name="Tallon L."/>
            <person name="Gray J."/>
            <person name="Granger D."/>
            <person name="Tettelin H."/>
            <person name="Dong H."/>
            <person name="Galvin J.L."/>
            <person name="Duncan M.J."/>
            <person name="Dewhirst F.E."/>
            <person name="Fraser C.M."/>
        </authorList>
    </citation>
    <scope>NUCLEOTIDE SEQUENCE [LARGE SCALE GENOMIC DNA]</scope>
    <source>
        <strain>ATCC BAA-308 / W83</strain>
    </source>
</reference>
<feature type="chain" id="PRO_0000119622" description="Glutamate--tRNA ligase">
    <location>
        <begin position="1"/>
        <end position="505"/>
    </location>
</feature>
<feature type="short sequence motif" description="'HIGH' region" evidence="1">
    <location>
        <begin position="12"/>
        <end position="22"/>
    </location>
</feature>
<feature type="short sequence motif" description="'KMSKS' region" evidence="1">
    <location>
        <begin position="260"/>
        <end position="264"/>
    </location>
</feature>
<feature type="binding site" evidence="1">
    <location>
        <position position="263"/>
    </location>
    <ligand>
        <name>ATP</name>
        <dbReference type="ChEBI" id="CHEBI:30616"/>
    </ligand>
</feature>
<evidence type="ECO:0000255" key="1">
    <source>
        <dbReference type="HAMAP-Rule" id="MF_00022"/>
    </source>
</evidence>